<proteinExistence type="evidence at protein level"/>
<sequence length="603" mass="67634">MAAESGELIGACEFMKDRLYFATLRNRPKSTINIHYFSIDEELVYENFYADFGPLNLAMVYRYCCKLNKKLKSYSLSRKKIVHYTSFDQRKRANAAFLIGAYAVIYLKKTPEEAYRALLSGSNPPYLPFRDASFGNCTYNLTVLDCLQGIRKGLQHGFFDFETFDAEEYEHYERVENGDFNWIVPGKFLAFSGPHPKSKIENGYPLHAPEAYFPYFKKNNVTTIVRLNKKIYEAKRFTDAGFEHYDLFFIDGSTPSDNIVRRFLNICENTEGAIAVHCKAGLGRTGTLIACYVMKHYRFTHAEIIAWIRICRPGSIIGPQQHFLKEKQASLWVQGDIFRSKLKNRPSSEGSITKIISTLDDMSIGANLSKLQSTERIGENNFEDEDMEIKNNVTQGDKLRALKSQRHPRSSPSCAFRSDDMKGHQRAMAQTFRLSSSPQPTMSTMKTSKVCLSPSVTAKKISRGSLSSGANIRSFSINSRLASSLGNLNAGTEEPETKKTTSLTKAAFIASPFTSFLNGSTQTPGRNYPELNNNQYTRSSNSNSSSSSSGLGGNLNSSPVPQSAKPEEHTTILRPSFPGSLSSSSVRFLSRSIPSLQSEYVHY</sequence>
<protein>
    <recommendedName>
        <fullName>Dual specificity protein phosphatase CDC14A</fullName>
        <ecNumber>3.1.3.16</ecNumber>
        <ecNumber>3.1.3.48</ecNumber>
    </recommendedName>
    <alternativeName>
        <fullName>CDC14 cell division cycle 14 homolog A</fullName>
    </alternativeName>
</protein>
<keyword id="KW-0025">Alternative splicing</keyword>
<keyword id="KW-0131">Cell cycle</keyword>
<keyword id="KW-0132">Cell division</keyword>
<keyword id="KW-0966">Cell projection</keyword>
<keyword id="KW-0963">Cytoplasm</keyword>
<keyword id="KW-0206">Cytoskeleton</keyword>
<keyword id="KW-1009">Hearing</keyword>
<keyword id="KW-0378">Hydrolase</keyword>
<keyword id="KW-0539">Nucleus</keyword>
<keyword id="KW-0597">Phosphoprotein</keyword>
<keyword id="KW-0904">Protein phosphatase</keyword>
<keyword id="KW-1185">Reference proteome</keyword>
<dbReference type="EC" id="3.1.3.16"/>
<dbReference type="EC" id="3.1.3.48"/>
<dbReference type="EMBL" id="BC072644">
    <property type="protein sequence ID" value="AAH72644.1"/>
    <property type="molecule type" value="mRNA"/>
</dbReference>
<dbReference type="EMBL" id="AK036556">
    <property type="protein sequence ID" value="BAC29476.1"/>
    <property type="molecule type" value="mRNA"/>
</dbReference>
<dbReference type="CCDS" id="CCDS38611.1">
    <molecule id="Q6GQT0-1"/>
</dbReference>
<dbReference type="CCDS" id="CCDS51058.1">
    <molecule id="Q6GQT0-2"/>
</dbReference>
<dbReference type="RefSeq" id="NP_001074287.1">
    <molecule id="Q6GQT0-1"/>
    <property type="nucleotide sequence ID" value="NM_001080818.2"/>
</dbReference>
<dbReference type="RefSeq" id="NP_001167024.1">
    <molecule id="Q6GQT0-2"/>
    <property type="nucleotide sequence ID" value="NM_001173553.2"/>
</dbReference>
<dbReference type="SMR" id="Q6GQT0"/>
<dbReference type="FunCoup" id="Q6GQT0">
    <property type="interactions" value="1097"/>
</dbReference>
<dbReference type="STRING" id="10090.ENSMUSP00000087950"/>
<dbReference type="GlyGen" id="Q6GQT0">
    <property type="glycosylation" value="1 site, 1 N-linked glycan (1 site)"/>
</dbReference>
<dbReference type="iPTMnet" id="Q6GQT0"/>
<dbReference type="PhosphoSitePlus" id="Q6GQT0"/>
<dbReference type="jPOST" id="Q6GQT0"/>
<dbReference type="PaxDb" id="10090-ENSMUSP00000087950"/>
<dbReference type="ProteomicsDB" id="265578">
    <molecule id="Q6GQT0-1"/>
</dbReference>
<dbReference type="ProteomicsDB" id="265579">
    <molecule id="Q6GQT0-2"/>
</dbReference>
<dbReference type="Antibodypedia" id="19991">
    <property type="antibodies" value="316 antibodies from 32 providers"/>
</dbReference>
<dbReference type="DNASU" id="229776"/>
<dbReference type="Ensembl" id="ENSMUST00000090464.7">
    <molecule id="Q6GQT0-1"/>
    <property type="protein sequence ID" value="ENSMUSP00000087950.5"/>
    <property type="gene ID" value="ENSMUSG00000033502.16"/>
</dbReference>
<dbReference type="Ensembl" id="ENSMUST00000106491.7">
    <molecule id="Q6GQT0-2"/>
    <property type="protein sequence ID" value="ENSMUSP00000102100.3"/>
    <property type="gene ID" value="ENSMUSG00000033502.16"/>
</dbReference>
<dbReference type="GeneID" id="229776"/>
<dbReference type="KEGG" id="mmu:229776"/>
<dbReference type="UCSC" id="uc008rca.1">
    <molecule id="Q6GQT0-1"/>
    <property type="organism name" value="mouse"/>
</dbReference>
<dbReference type="UCSC" id="uc012cwq.1">
    <molecule id="Q6GQT0-2"/>
    <property type="organism name" value="mouse"/>
</dbReference>
<dbReference type="AGR" id="MGI:2442676"/>
<dbReference type="CTD" id="8556"/>
<dbReference type="MGI" id="MGI:2442676">
    <property type="gene designation" value="Cdc14a"/>
</dbReference>
<dbReference type="VEuPathDB" id="HostDB:ENSMUSG00000033502"/>
<dbReference type="eggNOG" id="KOG1720">
    <property type="taxonomic scope" value="Eukaryota"/>
</dbReference>
<dbReference type="GeneTree" id="ENSGT00940000155899"/>
<dbReference type="HOGENOM" id="CLU_017787_2_2_1"/>
<dbReference type="InParanoid" id="Q6GQT0"/>
<dbReference type="OMA" id="YRFTHTE"/>
<dbReference type="OrthoDB" id="266663at2759"/>
<dbReference type="PhylomeDB" id="Q6GQT0"/>
<dbReference type="TreeFam" id="TF101053"/>
<dbReference type="Reactome" id="R-MMU-176407">
    <property type="pathway name" value="Conversion from APC/C:Cdc20 to APC/C:Cdh1 in late anaphase"/>
</dbReference>
<dbReference type="Reactome" id="R-MMU-5687128">
    <property type="pathway name" value="MAPK6/MAPK4 signaling"/>
</dbReference>
<dbReference type="BioGRID-ORCS" id="229776">
    <property type="hits" value="0 hits in 78 CRISPR screens"/>
</dbReference>
<dbReference type="ChiTaRS" id="Cdc14a">
    <property type="organism name" value="mouse"/>
</dbReference>
<dbReference type="PRO" id="PR:Q6GQT0"/>
<dbReference type="Proteomes" id="UP000000589">
    <property type="component" value="Chromosome 3"/>
</dbReference>
<dbReference type="RNAct" id="Q6GQT0">
    <property type="molecule type" value="protein"/>
</dbReference>
<dbReference type="Bgee" id="ENSMUSG00000033502">
    <property type="expression patterns" value="Expressed in ciliary body and 205 other cell types or tissues"/>
</dbReference>
<dbReference type="ExpressionAtlas" id="Q6GQT0">
    <property type="expression patterns" value="baseline and differential"/>
</dbReference>
<dbReference type="GO" id="GO:0005813">
    <property type="term" value="C:centrosome"/>
    <property type="evidence" value="ECO:0007669"/>
    <property type="project" value="UniProtKB-SubCell"/>
</dbReference>
<dbReference type="GO" id="GO:0005829">
    <property type="term" value="C:cytosol"/>
    <property type="evidence" value="ECO:0007669"/>
    <property type="project" value="Ensembl"/>
</dbReference>
<dbReference type="GO" id="GO:0005783">
    <property type="term" value="C:endoplasmic reticulum"/>
    <property type="evidence" value="ECO:0007669"/>
    <property type="project" value="Ensembl"/>
</dbReference>
<dbReference type="GO" id="GO:1902636">
    <property type="term" value="C:kinociliary basal body"/>
    <property type="evidence" value="ECO:0000314"/>
    <property type="project" value="UniProtKB"/>
</dbReference>
<dbReference type="GO" id="GO:0060091">
    <property type="term" value="C:kinocilium"/>
    <property type="evidence" value="ECO:0000314"/>
    <property type="project" value="UniProtKB"/>
</dbReference>
<dbReference type="GO" id="GO:0005654">
    <property type="term" value="C:nucleoplasm"/>
    <property type="evidence" value="ECO:0007669"/>
    <property type="project" value="Ensembl"/>
</dbReference>
<dbReference type="GO" id="GO:0000922">
    <property type="term" value="C:spindle pole"/>
    <property type="evidence" value="ECO:0007669"/>
    <property type="project" value="UniProtKB-SubCell"/>
</dbReference>
<dbReference type="GO" id="GO:0032426">
    <property type="term" value="C:stereocilium tip"/>
    <property type="evidence" value="ECO:0000314"/>
    <property type="project" value="UniProtKB"/>
</dbReference>
<dbReference type="GO" id="GO:0004722">
    <property type="term" value="F:protein serine/threonine phosphatase activity"/>
    <property type="evidence" value="ECO:0007669"/>
    <property type="project" value="UniProtKB-EC"/>
</dbReference>
<dbReference type="GO" id="GO:0004725">
    <property type="term" value="F:protein tyrosine phosphatase activity"/>
    <property type="evidence" value="ECO:0007669"/>
    <property type="project" value="UniProtKB-EC"/>
</dbReference>
<dbReference type="GO" id="GO:0051301">
    <property type="term" value="P:cell division"/>
    <property type="evidence" value="ECO:0007669"/>
    <property type="project" value="UniProtKB-KW"/>
</dbReference>
<dbReference type="GO" id="GO:0007605">
    <property type="term" value="P:sensory perception of sound"/>
    <property type="evidence" value="ECO:0000315"/>
    <property type="project" value="UniProtKB"/>
</dbReference>
<dbReference type="CDD" id="cd14499">
    <property type="entry name" value="CDC14_C"/>
    <property type="match status" value="1"/>
</dbReference>
<dbReference type="CDD" id="cd17657">
    <property type="entry name" value="CDC14_N"/>
    <property type="match status" value="1"/>
</dbReference>
<dbReference type="FunFam" id="3.90.190.10:FF:000032">
    <property type="entry name" value="dual specificity protein phosphatase CDC14A isoform X1"/>
    <property type="match status" value="1"/>
</dbReference>
<dbReference type="FunFam" id="3.90.190.10:FF:000006">
    <property type="entry name" value="Dual specificity protein phosphatase CDC14B"/>
    <property type="match status" value="1"/>
</dbReference>
<dbReference type="Gene3D" id="3.90.190.10">
    <property type="entry name" value="Protein tyrosine phosphatase superfamily"/>
    <property type="match status" value="2"/>
</dbReference>
<dbReference type="InterPro" id="IPR044506">
    <property type="entry name" value="CDC14_C"/>
</dbReference>
<dbReference type="InterPro" id="IPR029260">
    <property type="entry name" value="DSPn"/>
</dbReference>
<dbReference type="InterPro" id="IPR029021">
    <property type="entry name" value="Prot-tyrosine_phosphatase-like"/>
</dbReference>
<dbReference type="InterPro" id="IPR050561">
    <property type="entry name" value="PTP"/>
</dbReference>
<dbReference type="InterPro" id="IPR016130">
    <property type="entry name" value="Tyr_Pase_AS"/>
</dbReference>
<dbReference type="InterPro" id="IPR003595">
    <property type="entry name" value="Tyr_Pase_cat"/>
</dbReference>
<dbReference type="InterPro" id="IPR000387">
    <property type="entry name" value="Tyr_Pase_dom"/>
</dbReference>
<dbReference type="InterPro" id="IPR020422">
    <property type="entry name" value="TYR_PHOSPHATASE_DUAL_dom"/>
</dbReference>
<dbReference type="PANTHER" id="PTHR23339">
    <property type="entry name" value="TYROSINE SPECIFIC PROTEIN PHOSPHATASE AND DUAL SPECIFICITY PROTEIN PHOSPHATASE"/>
    <property type="match status" value="1"/>
</dbReference>
<dbReference type="Pfam" id="PF14671">
    <property type="entry name" value="DSPn"/>
    <property type="match status" value="1"/>
</dbReference>
<dbReference type="Pfam" id="PF22785">
    <property type="entry name" value="Tc-R-P"/>
    <property type="match status" value="1"/>
</dbReference>
<dbReference type="SMART" id="SM00195">
    <property type="entry name" value="DSPc"/>
    <property type="match status" value="1"/>
</dbReference>
<dbReference type="SMART" id="SM00404">
    <property type="entry name" value="PTPc_motif"/>
    <property type="match status" value="1"/>
</dbReference>
<dbReference type="SUPFAM" id="SSF52799">
    <property type="entry name" value="(Phosphotyrosine protein) phosphatases II"/>
    <property type="match status" value="2"/>
</dbReference>
<dbReference type="PROSITE" id="PS00383">
    <property type="entry name" value="TYR_PHOSPHATASE_1"/>
    <property type="match status" value="1"/>
</dbReference>
<dbReference type="PROSITE" id="PS50056">
    <property type="entry name" value="TYR_PHOSPHATASE_2"/>
    <property type="match status" value="1"/>
</dbReference>
<dbReference type="PROSITE" id="PS50054">
    <property type="entry name" value="TYR_PHOSPHATASE_DUAL"/>
    <property type="match status" value="1"/>
</dbReference>
<evidence type="ECO:0000250" key="1"/>
<evidence type="ECO:0000250" key="2">
    <source>
        <dbReference type="UniProtKB" id="Q9UNH5"/>
    </source>
</evidence>
<evidence type="ECO:0000255" key="3">
    <source>
        <dbReference type="PROSITE-ProRule" id="PRU00160"/>
    </source>
</evidence>
<evidence type="ECO:0000255" key="4">
    <source>
        <dbReference type="PROSITE-ProRule" id="PRU10044"/>
    </source>
</evidence>
<evidence type="ECO:0000256" key="5">
    <source>
        <dbReference type="SAM" id="MobiDB-lite"/>
    </source>
</evidence>
<evidence type="ECO:0000269" key="6">
    <source>
    </source>
</evidence>
<evidence type="ECO:0000269" key="7">
    <source>
    </source>
</evidence>
<evidence type="ECO:0000303" key="8">
    <source>
    </source>
</evidence>
<evidence type="ECO:0000305" key="9"/>
<gene>
    <name type="primary">Cdc14a</name>
</gene>
<comment type="function">
    <text evidence="2 7">Dual-specificity phosphatase. Required for centrosome separation and productive cytokinesis during cell division. Dephosphorylates SIRT2 around early anaphase. May dephosphorylate the APC subunit FZR1/CDH1, thereby promoting APC-FZR1 dependent degradation of mitotic cyclins and subsequent exit from mitosis (By similarity). Required for normal hearing (PubMed:29293958).</text>
</comment>
<comment type="catalytic activity">
    <reaction evidence="4">
        <text>O-phospho-L-tyrosyl-[protein] + H2O = L-tyrosyl-[protein] + phosphate</text>
        <dbReference type="Rhea" id="RHEA:10684"/>
        <dbReference type="Rhea" id="RHEA-COMP:10136"/>
        <dbReference type="Rhea" id="RHEA-COMP:20101"/>
        <dbReference type="ChEBI" id="CHEBI:15377"/>
        <dbReference type="ChEBI" id="CHEBI:43474"/>
        <dbReference type="ChEBI" id="CHEBI:46858"/>
        <dbReference type="ChEBI" id="CHEBI:61978"/>
        <dbReference type="EC" id="3.1.3.48"/>
    </reaction>
</comment>
<comment type="catalytic activity">
    <reaction>
        <text>O-phospho-L-seryl-[protein] + H2O = L-seryl-[protein] + phosphate</text>
        <dbReference type="Rhea" id="RHEA:20629"/>
        <dbReference type="Rhea" id="RHEA-COMP:9863"/>
        <dbReference type="Rhea" id="RHEA-COMP:11604"/>
        <dbReference type="ChEBI" id="CHEBI:15377"/>
        <dbReference type="ChEBI" id="CHEBI:29999"/>
        <dbReference type="ChEBI" id="CHEBI:43474"/>
        <dbReference type="ChEBI" id="CHEBI:83421"/>
        <dbReference type="EC" id="3.1.3.16"/>
    </reaction>
</comment>
<comment type="catalytic activity">
    <reaction>
        <text>O-phospho-L-threonyl-[protein] + H2O = L-threonyl-[protein] + phosphate</text>
        <dbReference type="Rhea" id="RHEA:47004"/>
        <dbReference type="Rhea" id="RHEA-COMP:11060"/>
        <dbReference type="Rhea" id="RHEA-COMP:11605"/>
        <dbReference type="ChEBI" id="CHEBI:15377"/>
        <dbReference type="ChEBI" id="CHEBI:30013"/>
        <dbReference type="ChEBI" id="CHEBI:43474"/>
        <dbReference type="ChEBI" id="CHEBI:61977"/>
        <dbReference type="EC" id="3.1.3.16"/>
    </reaction>
</comment>
<comment type="subunit">
    <text evidence="1">Interacts with KIF20A. Interaction is required to localize CDC14 to the midzone of the mitotic spindle (By similarity).</text>
</comment>
<comment type="subcellular location">
    <subcellularLocation>
        <location evidence="2">Nucleus</location>
    </subcellularLocation>
    <subcellularLocation>
        <location evidence="2">Cytoplasm</location>
        <location evidence="2">Cytoskeleton</location>
        <location evidence="2">Microtubule organizing center</location>
        <location evidence="2">Centrosome</location>
    </subcellularLocation>
    <subcellularLocation>
        <location evidence="2">Cytoplasm</location>
        <location evidence="2">Cytoskeleton</location>
        <location evidence="2">Spindle</location>
    </subcellularLocation>
    <subcellularLocation>
        <location evidence="6 7">Cell projection</location>
        <location evidence="6 7">Kinocilium</location>
    </subcellularLocation>
    <subcellularLocation>
        <location evidence="2">Cytoplasm</location>
        <location evidence="2">Cytoskeleton</location>
        <location evidence="2">Spindle pole</location>
    </subcellularLocation>
    <subcellularLocation>
        <location evidence="7">Cell projection</location>
        <location evidence="7">Stereocilium</location>
    </subcellularLocation>
    <text evidence="2 6">Centrosomal during interphase, released into the cytoplasm at the onset of mitosis. Subsequently localizes to the mitotic spindle pole and at the central spindle (By similarity). Present along both the transient kinocilia of developing cochlear hair cells and the persistent kinocilia of vestibular hair cells (PubMed:27259055).</text>
</comment>
<comment type="alternative products">
    <event type="alternative splicing"/>
    <isoform>
        <id>Q6GQT0-1</id>
        <name>1</name>
        <sequence type="displayed"/>
    </isoform>
    <isoform>
        <id>Q6GQT0-2</id>
        <name>2</name>
        <sequence type="described" ref="VSP_012324"/>
    </isoform>
</comment>
<comment type="tissue specificity">
    <text evidence="7">Expressed in the inner ear.</text>
</comment>
<comment type="domain">
    <text evidence="1">Composed of two structurally equivalent A and B domains that adopt a dual specificity protein phosphatase (DSP) fold.</text>
</comment>
<comment type="similarity">
    <text evidence="9">Belongs to the protein-tyrosine phosphatase family. Non-receptor class CDC14 subfamily.</text>
</comment>
<organism>
    <name type="scientific">Mus musculus</name>
    <name type="common">Mouse</name>
    <dbReference type="NCBI Taxonomy" id="10090"/>
    <lineage>
        <taxon>Eukaryota</taxon>
        <taxon>Metazoa</taxon>
        <taxon>Chordata</taxon>
        <taxon>Craniata</taxon>
        <taxon>Vertebrata</taxon>
        <taxon>Euteleostomi</taxon>
        <taxon>Mammalia</taxon>
        <taxon>Eutheria</taxon>
        <taxon>Euarchontoglires</taxon>
        <taxon>Glires</taxon>
        <taxon>Rodentia</taxon>
        <taxon>Myomorpha</taxon>
        <taxon>Muroidea</taxon>
        <taxon>Muridae</taxon>
        <taxon>Murinae</taxon>
        <taxon>Mus</taxon>
        <taxon>Mus</taxon>
    </lineage>
</organism>
<feature type="chain" id="PRO_0000094877" description="Dual specificity protein phosphatase CDC14A">
    <location>
        <begin position="1"/>
        <end position="603"/>
    </location>
</feature>
<feature type="domain" description="Tyrosine-protein phosphatase" evidence="3">
    <location>
        <begin position="179"/>
        <end position="336"/>
    </location>
</feature>
<feature type="region of interest" description="A">
    <location>
        <begin position="7"/>
        <end position="162"/>
    </location>
</feature>
<feature type="region of interest" description="Linker">
    <location>
        <begin position="163"/>
        <end position="176"/>
    </location>
</feature>
<feature type="region of interest" description="B">
    <location>
        <begin position="177"/>
        <end position="343"/>
    </location>
</feature>
<feature type="region of interest" description="Disordered" evidence="5">
    <location>
        <begin position="518"/>
        <end position="583"/>
    </location>
</feature>
<feature type="compositionally biased region" description="Polar residues" evidence="5">
    <location>
        <begin position="518"/>
        <end position="538"/>
    </location>
</feature>
<feature type="compositionally biased region" description="Low complexity" evidence="5">
    <location>
        <begin position="539"/>
        <end position="558"/>
    </location>
</feature>
<feature type="compositionally biased region" description="Low complexity" evidence="5">
    <location>
        <begin position="573"/>
        <end position="583"/>
    </location>
</feature>
<feature type="active site" description="Phosphocysteine intermediate" evidence="3">
    <location>
        <position position="278"/>
    </location>
</feature>
<feature type="modified residue" description="Phosphoserine" evidence="2">
    <location>
        <position position="484"/>
    </location>
</feature>
<feature type="modified residue" description="Phosphoserine" evidence="2">
    <location>
        <position position="592"/>
    </location>
</feature>
<feature type="splice variant" id="VSP_012324" description="In isoform 2." evidence="8">
    <location>
        <begin position="104"/>
        <end position="152"/>
    </location>
</feature>
<feature type="mutagenesis site" description="Mutant mice are deaf, show fusion of stereocilia and degeneration of hair cells, and have low sperm counts." evidence="7">
    <original>C</original>
    <variation>S</variation>
    <location>
        <position position="278"/>
    </location>
</feature>
<accession>Q6GQT0</accession>
<accession>Q8BZ66</accession>
<name>CC14A_MOUSE</name>
<reference key="1">
    <citation type="journal article" date="2004" name="Genome Res.">
        <title>The status, quality, and expansion of the NIH full-length cDNA project: the Mammalian Gene Collection (MGC).</title>
        <authorList>
            <consortium name="The MGC Project Team"/>
        </authorList>
    </citation>
    <scope>NUCLEOTIDE SEQUENCE [LARGE SCALE MRNA] (ISOFORM 2)</scope>
    <source>
        <strain>C57BL/6J</strain>
        <tissue>Brain</tissue>
    </source>
</reference>
<reference key="2">
    <citation type="journal article" date="2005" name="Science">
        <title>The transcriptional landscape of the mammalian genome.</title>
        <authorList>
            <person name="Carninci P."/>
            <person name="Kasukawa T."/>
            <person name="Katayama S."/>
            <person name="Gough J."/>
            <person name="Frith M.C."/>
            <person name="Maeda N."/>
            <person name="Oyama R."/>
            <person name="Ravasi T."/>
            <person name="Lenhard B."/>
            <person name="Wells C."/>
            <person name="Kodzius R."/>
            <person name="Shimokawa K."/>
            <person name="Bajic V.B."/>
            <person name="Brenner S.E."/>
            <person name="Batalov S."/>
            <person name="Forrest A.R."/>
            <person name="Zavolan M."/>
            <person name="Davis M.J."/>
            <person name="Wilming L.G."/>
            <person name="Aidinis V."/>
            <person name="Allen J.E."/>
            <person name="Ambesi-Impiombato A."/>
            <person name="Apweiler R."/>
            <person name="Aturaliya R.N."/>
            <person name="Bailey T.L."/>
            <person name="Bansal M."/>
            <person name="Baxter L."/>
            <person name="Beisel K.W."/>
            <person name="Bersano T."/>
            <person name="Bono H."/>
            <person name="Chalk A.M."/>
            <person name="Chiu K.P."/>
            <person name="Choudhary V."/>
            <person name="Christoffels A."/>
            <person name="Clutterbuck D.R."/>
            <person name="Crowe M.L."/>
            <person name="Dalla E."/>
            <person name="Dalrymple B.P."/>
            <person name="de Bono B."/>
            <person name="Della Gatta G."/>
            <person name="di Bernardo D."/>
            <person name="Down T."/>
            <person name="Engstrom P."/>
            <person name="Fagiolini M."/>
            <person name="Faulkner G."/>
            <person name="Fletcher C.F."/>
            <person name="Fukushima T."/>
            <person name="Furuno M."/>
            <person name="Futaki S."/>
            <person name="Gariboldi M."/>
            <person name="Georgii-Hemming P."/>
            <person name="Gingeras T.R."/>
            <person name="Gojobori T."/>
            <person name="Green R.E."/>
            <person name="Gustincich S."/>
            <person name="Harbers M."/>
            <person name="Hayashi Y."/>
            <person name="Hensch T.K."/>
            <person name="Hirokawa N."/>
            <person name="Hill D."/>
            <person name="Huminiecki L."/>
            <person name="Iacono M."/>
            <person name="Ikeo K."/>
            <person name="Iwama A."/>
            <person name="Ishikawa T."/>
            <person name="Jakt M."/>
            <person name="Kanapin A."/>
            <person name="Katoh M."/>
            <person name="Kawasawa Y."/>
            <person name="Kelso J."/>
            <person name="Kitamura H."/>
            <person name="Kitano H."/>
            <person name="Kollias G."/>
            <person name="Krishnan S.P."/>
            <person name="Kruger A."/>
            <person name="Kummerfeld S.K."/>
            <person name="Kurochkin I.V."/>
            <person name="Lareau L.F."/>
            <person name="Lazarevic D."/>
            <person name="Lipovich L."/>
            <person name="Liu J."/>
            <person name="Liuni S."/>
            <person name="McWilliam S."/>
            <person name="Madan Babu M."/>
            <person name="Madera M."/>
            <person name="Marchionni L."/>
            <person name="Matsuda H."/>
            <person name="Matsuzawa S."/>
            <person name="Miki H."/>
            <person name="Mignone F."/>
            <person name="Miyake S."/>
            <person name="Morris K."/>
            <person name="Mottagui-Tabar S."/>
            <person name="Mulder N."/>
            <person name="Nakano N."/>
            <person name="Nakauchi H."/>
            <person name="Ng P."/>
            <person name="Nilsson R."/>
            <person name="Nishiguchi S."/>
            <person name="Nishikawa S."/>
            <person name="Nori F."/>
            <person name="Ohara O."/>
            <person name="Okazaki Y."/>
            <person name="Orlando V."/>
            <person name="Pang K.C."/>
            <person name="Pavan W.J."/>
            <person name="Pavesi G."/>
            <person name="Pesole G."/>
            <person name="Petrovsky N."/>
            <person name="Piazza S."/>
            <person name="Reed J."/>
            <person name="Reid J.F."/>
            <person name="Ring B.Z."/>
            <person name="Ringwald M."/>
            <person name="Rost B."/>
            <person name="Ruan Y."/>
            <person name="Salzberg S.L."/>
            <person name="Sandelin A."/>
            <person name="Schneider C."/>
            <person name="Schoenbach C."/>
            <person name="Sekiguchi K."/>
            <person name="Semple C.A."/>
            <person name="Seno S."/>
            <person name="Sessa L."/>
            <person name="Sheng Y."/>
            <person name="Shibata Y."/>
            <person name="Shimada H."/>
            <person name="Shimada K."/>
            <person name="Silva D."/>
            <person name="Sinclair B."/>
            <person name="Sperling S."/>
            <person name="Stupka E."/>
            <person name="Sugiura K."/>
            <person name="Sultana R."/>
            <person name="Takenaka Y."/>
            <person name="Taki K."/>
            <person name="Tammoja K."/>
            <person name="Tan S.L."/>
            <person name="Tang S."/>
            <person name="Taylor M.S."/>
            <person name="Tegner J."/>
            <person name="Teichmann S.A."/>
            <person name="Ueda H.R."/>
            <person name="van Nimwegen E."/>
            <person name="Verardo R."/>
            <person name="Wei C.L."/>
            <person name="Yagi K."/>
            <person name="Yamanishi H."/>
            <person name="Zabarovsky E."/>
            <person name="Zhu S."/>
            <person name="Zimmer A."/>
            <person name="Hide W."/>
            <person name="Bult C."/>
            <person name="Grimmond S.M."/>
            <person name="Teasdale R.D."/>
            <person name="Liu E.T."/>
            <person name="Brusic V."/>
            <person name="Quackenbush J."/>
            <person name="Wahlestedt C."/>
            <person name="Mattick J.S."/>
            <person name="Hume D.A."/>
            <person name="Kai C."/>
            <person name="Sasaki D."/>
            <person name="Tomaru Y."/>
            <person name="Fukuda S."/>
            <person name="Kanamori-Katayama M."/>
            <person name="Suzuki M."/>
            <person name="Aoki J."/>
            <person name="Arakawa T."/>
            <person name="Iida J."/>
            <person name="Imamura K."/>
            <person name="Itoh M."/>
            <person name="Kato T."/>
            <person name="Kawaji H."/>
            <person name="Kawagashira N."/>
            <person name="Kawashima T."/>
            <person name="Kojima M."/>
            <person name="Kondo S."/>
            <person name="Konno H."/>
            <person name="Nakano K."/>
            <person name="Ninomiya N."/>
            <person name="Nishio T."/>
            <person name="Okada M."/>
            <person name="Plessy C."/>
            <person name="Shibata K."/>
            <person name="Shiraki T."/>
            <person name="Suzuki S."/>
            <person name="Tagami M."/>
            <person name="Waki K."/>
            <person name="Watahiki A."/>
            <person name="Okamura-Oho Y."/>
            <person name="Suzuki H."/>
            <person name="Kawai J."/>
            <person name="Hayashizaki Y."/>
        </authorList>
    </citation>
    <scope>NUCLEOTIDE SEQUENCE [LARGE SCALE MRNA] OF 72-603 (ISOFORM 1)</scope>
    <source>
        <strain>C57BL/6J</strain>
        <tissue>Bone</tissue>
    </source>
</reference>
<reference key="3">
    <citation type="journal article" date="2016" name="Am. J. Hum. Genet.">
        <title>Mutations in CDC14A, encoding a protein phosphatase involved in hair cell ciliogenesis, cause autosomal-recessive severe to profound deafness.</title>
        <authorList>
            <person name="Delmaghani S."/>
            <person name="Aghaie A."/>
            <person name="Bouyacoub Y."/>
            <person name="El Hachmi H."/>
            <person name="Bonnet C."/>
            <person name="Riahi Z."/>
            <person name="Chardenoux S."/>
            <person name="Perfettini I."/>
            <person name="Hardelin J.P."/>
            <person name="Houmeida A."/>
            <person name="Herbomel P."/>
            <person name="Petit C."/>
        </authorList>
    </citation>
    <scope>SUBCELLULAR LOCATION</scope>
</reference>
<reference key="4">
    <citation type="journal article" date="2018" name="Hum. Mol. Genet.">
        <title>CDC14A phosphatase is essential for hearing and male fertility in mouse and human.</title>
        <authorList>
            <person name="Imtiaz A."/>
            <person name="Belyantseva I.A."/>
            <person name="Beirl A.J."/>
            <person name="Fenollar-Ferrer C."/>
            <person name="Bashir R."/>
            <person name="Bukhari I."/>
            <person name="Bouzid A."/>
            <person name="Shaukat U."/>
            <person name="Azaiez H."/>
            <person name="Booth K.T."/>
            <person name="Kahrizi K."/>
            <person name="Najmabadi H."/>
            <person name="Maqsood A."/>
            <person name="Wilson E.A."/>
            <person name="Fitzgerald T.S."/>
            <person name="Tlili A."/>
            <person name="Olszewski R."/>
            <person name="Lund M."/>
            <person name="Chaudhry T."/>
            <person name="Rehman A.U."/>
            <person name="Starost M.F."/>
            <person name="Waryah A.M."/>
            <person name="Hoa M."/>
            <person name="Dong L."/>
            <person name="Morell R.J."/>
            <person name="Smith R.J.H."/>
            <person name="Riazuddin S."/>
            <person name="Masmoudi S."/>
            <person name="Kindt K.S."/>
            <person name="Naz S."/>
            <person name="Friedman T.B."/>
        </authorList>
    </citation>
    <scope>FUNCTION</scope>
    <scope>TISSUE SPECIFICITY</scope>
    <scope>SUBCELLULAR LOCATION</scope>
    <scope>MUTAGENESIS OF CYS-278</scope>
</reference>